<dbReference type="EC" id="3.1.26.5" evidence="1"/>
<dbReference type="EMBL" id="AE006470">
    <property type="protein sequence ID" value="AAM71252.1"/>
    <property type="molecule type" value="Genomic_DNA"/>
</dbReference>
<dbReference type="RefSeq" id="NP_660910.1">
    <property type="nucleotide sequence ID" value="NC_002932.3"/>
</dbReference>
<dbReference type="SMR" id="Q8KGG4"/>
<dbReference type="STRING" id="194439.CT0004"/>
<dbReference type="EnsemblBacteria" id="AAM71252">
    <property type="protein sequence ID" value="AAM71252"/>
    <property type="gene ID" value="CT0004"/>
</dbReference>
<dbReference type="KEGG" id="cte:CT0004"/>
<dbReference type="PATRIC" id="fig|194439.7.peg.4"/>
<dbReference type="eggNOG" id="COG0594">
    <property type="taxonomic scope" value="Bacteria"/>
</dbReference>
<dbReference type="HOGENOM" id="CLU_117179_1_1_10"/>
<dbReference type="OrthoDB" id="1524972at2"/>
<dbReference type="Proteomes" id="UP000001007">
    <property type="component" value="Chromosome"/>
</dbReference>
<dbReference type="GO" id="GO:0004526">
    <property type="term" value="F:ribonuclease P activity"/>
    <property type="evidence" value="ECO:0007669"/>
    <property type="project" value="UniProtKB-UniRule"/>
</dbReference>
<dbReference type="GO" id="GO:0000049">
    <property type="term" value="F:tRNA binding"/>
    <property type="evidence" value="ECO:0007669"/>
    <property type="project" value="UniProtKB-UniRule"/>
</dbReference>
<dbReference type="GO" id="GO:0001682">
    <property type="term" value="P:tRNA 5'-leader removal"/>
    <property type="evidence" value="ECO:0007669"/>
    <property type="project" value="UniProtKB-UniRule"/>
</dbReference>
<dbReference type="Gene3D" id="3.30.230.10">
    <property type="match status" value="1"/>
</dbReference>
<dbReference type="HAMAP" id="MF_00227">
    <property type="entry name" value="RNase_P"/>
    <property type="match status" value="1"/>
</dbReference>
<dbReference type="InterPro" id="IPR020568">
    <property type="entry name" value="Ribosomal_Su5_D2-typ_SF"/>
</dbReference>
<dbReference type="InterPro" id="IPR014721">
    <property type="entry name" value="Ribsml_uS5_D2-typ_fold_subgr"/>
</dbReference>
<dbReference type="InterPro" id="IPR000100">
    <property type="entry name" value="RNase_P"/>
</dbReference>
<dbReference type="InterPro" id="IPR020539">
    <property type="entry name" value="RNase_P_CS"/>
</dbReference>
<dbReference type="NCBIfam" id="NF002507">
    <property type="entry name" value="PRK01903.1-1"/>
    <property type="match status" value="1"/>
</dbReference>
<dbReference type="Pfam" id="PF00825">
    <property type="entry name" value="Ribonuclease_P"/>
    <property type="match status" value="1"/>
</dbReference>
<dbReference type="SUPFAM" id="SSF54211">
    <property type="entry name" value="Ribosomal protein S5 domain 2-like"/>
    <property type="match status" value="1"/>
</dbReference>
<dbReference type="PROSITE" id="PS00648">
    <property type="entry name" value="RIBONUCLEASE_P"/>
    <property type="match status" value="1"/>
</dbReference>
<gene>
    <name evidence="1" type="primary">rnpA</name>
    <name type="ordered locus">CT0004</name>
</gene>
<evidence type="ECO:0000255" key="1">
    <source>
        <dbReference type="HAMAP-Rule" id="MF_00227"/>
    </source>
</evidence>
<keyword id="KW-0255">Endonuclease</keyword>
<keyword id="KW-0378">Hydrolase</keyword>
<keyword id="KW-0540">Nuclease</keyword>
<keyword id="KW-1185">Reference proteome</keyword>
<keyword id="KW-0694">RNA-binding</keyword>
<keyword id="KW-0819">tRNA processing</keyword>
<comment type="function">
    <text evidence="1">RNaseP catalyzes the removal of the 5'-leader sequence from pre-tRNA to produce the mature 5'-terminus. It can also cleave other RNA substrates such as 4.5S RNA. The protein component plays an auxiliary but essential role in vivo by binding to the 5'-leader sequence and broadening the substrate specificity of the ribozyme.</text>
</comment>
<comment type="catalytic activity">
    <reaction evidence="1">
        <text>Endonucleolytic cleavage of RNA, removing 5'-extranucleotides from tRNA precursor.</text>
        <dbReference type="EC" id="3.1.26.5"/>
    </reaction>
</comment>
<comment type="subunit">
    <text evidence="1">Consists of a catalytic RNA component (M1 or rnpB) and a protein subunit.</text>
</comment>
<comment type="similarity">
    <text evidence="1">Belongs to the RnpA family.</text>
</comment>
<feature type="chain" id="PRO_0000198447" description="Ribonuclease P protein component">
    <location>
        <begin position="1"/>
        <end position="154"/>
    </location>
</feature>
<reference key="1">
    <citation type="journal article" date="2002" name="Proc. Natl. Acad. Sci. U.S.A.">
        <title>The complete genome sequence of Chlorobium tepidum TLS, a photosynthetic, anaerobic, green-sulfur bacterium.</title>
        <authorList>
            <person name="Eisen J.A."/>
            <person name="Nelson K.E."/>
            <person name="Paulsen I.T."/>
            <person name="Heidelberg J.F."/>
            <person name="Wu M."/>
            <person name="Dodson R.J."/>
            <person name="DeBoy R.T."/>
            <person name="Gwinn M.L."/>
            <person name="Nelson W.C."/>
            <person name="Haft D.H."/>
            <person name="Hickey E.K."/>
            <person name="Peterson J.D."/>
            <person name="Durkin A.S."/>
            <person name="Kolonay J.F."/>
            <person name="Yang F."/>
            <person name="Holt I.E."/>
            <person name="Umayam L.A."/>
            <person name="Mason T.M."/>
            <person name="Brenner M."/>
            <person name="Shea T.P."/>
            <person name="Parksey D.S."/>
            <person name="Nierman W.C."/>
            <person name="Feldblyum T.V."/>
            <person name="Hansen C.L."/>
            <person name="Craven M.B."/>
            <person name="Radune D."/>
            <person name="Vamathevan J.J."/>
            <person name="Khouri H.M."/>
            <person name="White O."/>
            <person name="Gruber T.M."/>
            <person name="Ketchum K.A."/>
            <person name="Venter J.C."/>
            <person name="Tettelin H."/>
            <person name="Bryant D.A."/>
            <person name="Fraser C.M."/>
        </authorList>
    </citation>
    <scope>NUCLEOTIDE SEQUENCE [LARGE SCALE GENOMIC DNA]</scope>
    <source>
        <strain>ATCC 49652 / DSM 12025 / NBRC 103806 / TLS</strain>
    </source>
</reference>
<sequence>MYPGMLSEKRTNALPRGEIARGKSAVSRLFSQGGRLKGGFLLLIYSASRPVEQAPRIPVRVLFTVGKKLVPRAVDRNRIKRLMREAYRLEKNILTRALAFDAGKGDHQVMLAFLYRARADAIPSLERFRAEIRHMLKNLLSNRLPQTREGDRIE</sequence>
<accession>Q8KGG4</accession>
<protein>
    <recommendedName>
        <fullName evidence="1">Ribonuclease P protein component</fullName>
        <shortName evidence="1">RNase P protein</shortName>
        <shortName evidence="1">RNaseP protein</shortName>
        <ecNumber evidence="1">3.1.26.5</ecNumber>
    </recommendedName>
    <alternativeName>
        <fullName evidence="1">Protein C5</fullName>
    </alternativeName>
</protein>
<name>RNPA_CHLTE</name>
<organism>
    <name type="scientific">Chlorobaculum tepidum (strain ATCC 49652 / DSM 12025 / NBRC 103806 / TLS)</name>
    <name type="common">Chlorobium tepidum</name>
    <dbReference type="NCBI Taxonomy" id="194439"/>
    <lineage>
        <taxon>Bacteria</taxon>
        <taxon>Pseudomonadati</taxon>
        <taxon>Chlorobiota</taxon>
        <taxon>Chlorobiia</taxon>
        <taxon>Chlorobiales</taxon>
        <taxon>Chlorobiaceae</taxon>
        <taxon>Chlorobaculum</taxon>
    </lineage>
</organism>
<proteinExistence type="inferred from homology"/>